<feature type="chain" id="PRO_0000433450" description="Probable inactive carboxylesterase Os04g0669700">
    <location>
        <begin position="1"/>
        <end position="245"/>
    </location>
</feature>
<feature type="active site" description="Charge relay system" evidence="1">
    <location>
        <position position="115"/>
    </location>
</feature>
<feature type="active site" description="Charge relay system" evidence="1">
    <location>
        <position position="201"/>
    </location>
</feature>
<dbReference type="EMBL" id="AL606619">
    <property type="protein sequence ID" value="CAE02818.1"/>
    <property type="molecule type" value="Genomic_DNA"/>
</dbReference>
<dbReference type="EMBL" id="AP008210">
    <property type="protein sequence ID" value="BAF16120.1"/>
    <property type="molecule type" value="Genomic_DNA"/>
</dbReference>
<dbReference type="EMBL" id="AP014960">
    <property type="status" value="NOT_ANNOTATED_CDS"/>
    <property type="molecule type" value="Genomic_DNA"/>
</dbReference>
<dbReference type="SMR" id="Q7XR62"/>
<dbReference type="FunCoup" id="Q7XR62">
    <property type="interactions" value="1666"/>
</dbReference>
<dbReference type="STRING" id="39947.Q7XR62"/>
<dbReference type="ESTHER" id="orysa-q7xr62">
    <property type="family name" value="LYsophospholipase_carboxylesterase"/>
</dbReference>
<dbReference type="PaxDb" id="39947-Q7XR62"/>
<dbReference type="KEGG" id="dosa:Os04g0669700"/>
<dbReference type="eggNOG" id="KOG2112">
    <property type="taxonomic scope" value="Eukaryota"/>
</dbReference>
<dbReference type="InParanoid" id="Q7XR62"/>
<dbReference type="OrthoDB" id="2418081at2759"/>
<dbReference type="Proteomes" id="UP000000763">
    <property type="component" value="Chromosome 4"/>
</dbReference>
<dbReference type="Proteomes" id="UP000059680">
    <property type="component" value="Chromosome 4"/>
</dbReference>
<dbReference type="GO" id="GO:0005737">
    <property type="term" value="C:cytoplasm"/>
    <property type="evidence" value="ECO:0000318"/>
    <property type="project" value="GO_Central"/>
</dbReference>
<dbReference type="GO" id="GO:0052689">
    <property type="term" value="F:carboxylic ester hydrolase activity"/>
    <property type="evidence" value="ECO:0000318"/>
    <property type="project" value="GO_Central"/>
</dbReference>
<dbReference type="GO" id="GO:0008474">
    <property type="term" value="F:palmitoyl-(protein) hydrolase activity"/>
    <property type="evidence" value="ECO:0000318"/>
    <property type="project" value="GO_Central"/>
</dbReference>
<dbReference type="GO" id="GO:0010363">
    <property type="term" value="P:regulation of plant-type hypersensitive response"/>
    <property type="evidence" value="ECO:0000318"/>
    <property type="project" value="GO_Central"/>
</dbReference>
<dbReference type="Gene3D" id="3.40.50.1820">
    <property type="entry name" value="alpha/beta hydrolase"/>
    <property type="match status" value="1"/>
</dbReference>
<dbReference type="InterPro" id="IPR029058">
    <property type="entry name" value="AB_hydrolase_fold"/>
</dbReference>
<dbReference type="InterPro" id="IPR050565">
    <property type="entry name" value="LYPA1-2/EST-like"/>
</dbReference>
<dbReference type="InterPro" id="IPR003140">
    <property type="entry name" value="PLipase/COase/thioEstase"/>
</dbReference>
<dbReference type="PANTHER" id="PTHR10655:SF57">
    <property type="entry name" value="INACTIVE CARBOXYLESTERASE OS04G0669700-RELATED"/>
    <property type="match status" value="1"/>
</dbReference>
<dbReference type="PANTHER" id="PTHR10655">
    <property type="entry name" value="LYSOPHOSPHOLIPASE-RELATED"/>
    <property type="match status" value="1"/>
</dbReference>
<dbReference type="Pfam" id="PF02230">
    <property type="entry name" value="Abhydrolase_2"/>
    <property type="match status" value="1"/>
</dbReference>
<dbReference type="SUPFAM" id="SSF53474">
    <property type="entry name" value="alpha/beta-Hydrolases"/>
    <property type="match status" value="1"/>
</dbReference>
<accession>Q7XR62</accession>
<evidence type="ECO:0000250" key="1">
    <source>
        <dbReference type="UniProtKB" id="O75608"/>
    </source>
</evidence>
<evidence type="ECO:0000305" key="2"/>
<evidence type="ECO:0000312" key="3">
    <source>
        <dbReference type="EMBL" id="BAF16120.1"/>
    </source>
</evidence>
<evidence type="ECO:0000312" key="4">
    <source>
        <dbReference type="EMBL" id="CAE02818.1"/>
    </source>
</evidence>
<reference key="1">
    <citation type="journal article" date="2002" name="Nature">
        <title>Sequence and analysis of rice chromosome 4.</title>
        <authorList>
            <person name="Feng Q."/>
            <person name="Zhang Y."/>
            <person name="Hao P."/>
            <person name="Wang S."/>
            <person name="Fu G."/>
            <person name="Huang Y."/>
            <person name="Li Y."/>
            <person name="Zhu J."/>
            <person name="Liu Y."/>
            <person name="Hu X."/>
            <person name="Jia P."/>
            <person name="Zhang Y."/>
            <person name="Zhao Q."/>
            <person name="Ying K."/>
            <person name="Yu S."/>
            <person name="Tang Y."/>
            <person name="Weng Q."/>
            <person name="Zhang L."/>
            <person name="Lu Y."/>
            <person name="Mu J."/>
            <person name="Lu Y."/>
            <person name="Zhang L.S."/>
            <person name="Yu Z."/>
            <person name="Fan D."/>
            <person name="Liu X."/>
            <person name="Lu T."/>
            <person name="Li C."/>
            <person name="Wu Y."/>
            <person name="Sun T."/>
            <person name="Lei H."/>
            <person name="Li T."/>
            <person name="Hu H."/>
            <person name="Guan J."/>
            <person name="Wu M."/>
            <person name="Zhang R."/>
            <person name="Zhou B."/>
            <person name="Chen Z."/>
            <person name="Chen L."/>
            <person name="Jin Z."/>
            <person name="Wang R."/>
            <person name="Yin H."/>
            <person name="Cai Z."/>
            <person name="Ren S."/>
            <person name="Lv G."/>
            <person name="Gu W."/>
            <person name="Zhu G."/>
            <person name="Tu Y."/>
            <person name="Jia J."/>
            <person name="Zhang Y."/>
            <person name="Chen J."/>
            <person name="Kang H."/>
            <person name="Chen X."/>
            <person name="Shao C."/>
            <person name="Sun Y."/>
            <person name="Hu Q."/>
            <person name="Zhang X."/>
            <person name="Zhang W."/>
            <person name="Wang L."/>
            <person name="Ding C."/>
            <person name="Sheng H."/>
            <person name="Gu J."/>
            <person name="Chen S."/>
            <person name="Ni L."/>
            <person name="Zhu F."/>
            <person name="Chen W."/>
            <person name="Lan L."/>
            <person name="Lai Y."/>
            <person name="Cheng Z."/>
            <person name="Gu M."/>
            <person name="Jiang J."/>
            <person name="Li J."/>
            <person name="Hong G."/>
            <person name="Xue Y."/>
            <person name="Han B."/>
        </authorList>
    </citation>
    <scope>NUCLEOTIDE SEQUENCE [LARGE SCALE GENOMIC DNA]</scope>
    <source>
        <strain>cv. Nipponbare</strain>
    </source>
</reference>
<reference key="2">
    <citation type="journal article" date="2005" name="Nature">
        <title>The map-based sequence of the rice genome.</title>
        <authorList>
            <consortium name="International rice genome sequencing project (IRGSP)"/>
        </authorList>
    </citation>
    <scope>NUCLEOTIDE SEQUENCE [LARGE SCALE GENOMIC DNA]</scope>
    <source>
        <strain>cv. Nipponbare</strain>
    </source>
</reference>
<reference key="3">
    <citation type="journal article" date="2008" name="Nucleic Acids Res.">
        <title>The rice annotation project database (RAP-DB): 2008 update.</title>
        <authorList>
            <consortium name="The rice annotation project (RAP)"/>
        </authorList>
    </citation>
    <scope>GENOME REANNOTATION</scope>
    <source>
        <strain>cv. Nipponbare</strain>
    </source>
</reference>
<reference key="4">
    <citation type="journal article" date="2013" name="Rice">
        <title>Improvement of the Oryza sativa Nipponbare reference genome using next generation sequence and optical map data.</title>
        <authorList>
            <person name="Kawahara Y."/>
            <person name="de la Bastide M."/>
            <person name="Hamilton J.P."/>
            <person name="Kanamori H."/>
            <person name="McCombie W.R."/>
            <person name="Ouyang S."/>
            <person name="Schwartz D.C."/>
            <person name="Tanaka T."/>
            <person name="Wu J."/>
            <person name="Zhou S."/>
            <person name="Childs K.L."/>
            <person name="Davidson R.M."/>
            <person name="Lin H."/>
            <person name="Quesada-Ocampo L."/>
            <person name="Vaillancourt B."/>
            <person name="Sakai H."/>
            <person name="Lee S.S."/>
            <person name="Kim J."/>
            <person name="Numa H."/>
            <person name="Itoh T."/>
            <person name="Buell C.R."/>
            <person name="Matsumoto T."/>
        </authorList>
    </citation>
    <scope>GENOME REANNOTATION</scope>
    <source>
        <strain>cv. Nipponbare</strain>
    </source>
</reference>
<keyword id="KW-1185">Reference proteome</keyword>
<proteinExistence type="inferred from homology"/>
<sequence length="245" mass="27004">MEPATSRAPRSRFVVWLHGLGDTGRANEFLADSFPTTAAFADARWAFPTAPTAPVTCNRGMLMPSWFDIHDAPITSVSVRDEEDVLRAVQSVHAMIDREIAAGTNPQDVFVFGLSQGGALGIASVLLHPKTLGGCAVFSGFLPFNSSFAVRVTAQAKKTPVLWIHGQAGSLIPIKEGRDGIKFLRGLGMSCEFKVYDRLGHSLEYYELDYCQRWVEKILHRSGREGLIRRVSRNIFLCSNLFNSS</sequence>
<gene>
    <name evidence="3" type="ordered locus">Os04g0669700</name>
    <name evidence="2" type="ordered locus">LOC_Os04g57390</name>
    <name evidence="4" type="ORF">OSJNBa0043A12.23</name>
</gene>
<protein>
    <recommendedName>
        <fullName evidence="2">Probable inactive carboxylesterase Os04g0669700</fullName>
    </recommendedName>
</protein>
<organism>
    <name type="scientific">Oryza sativa subsp. japonica</name>
    <name type="common">Rice</name>
    <dbReference type="NCBI Taxonomy" id="39947"/>
    <lineage>
        <taxon>Eukaryota</taxon>
        <taxon>Viridiplantae</taxon>
        <taxon>Streptophyta</taxon>
        <taxon>Embryophyta</taxon>
        <taxon>Tracheophyta</taxon>
        <taxon>Spermatophyta</taxon>
        <taxon>Magnoliopsida</taxon>
        <taxon>Liliopsida</taxon>
        <taxon>Poales</taxon>
        <taxon>Poaceae</taxon>
        <taxon>BOP clade</taxon>
        <taxon>Oryzoideae</taxon>
        <taxon>Oryzeae</taxon>
        <taxon>Oryzinae</taxon>
        <taxon>Oryza</taxon>
        <taxon>Oryza sativa</taxon>
    </lineage>
</organism>
<name>CAEH3_ORYSJ</name>
<comment type="similarity">
    <text evidence="2">Belongs to the AB hydrolase superfamily. AB hydrolase 2 family.</text>
</comment>
<comment type="caution">
    <text evidence="2">Lacks the Asp residue of the conserved catalytic triad Ser-Asp-His.</text>
</comment>